<accession>Q2GFQ7</accession>
<organism>
    <name type="scientific">Ehrlichia chaffeensis (strain ATCC CRL-10679 / Arkansas)</name>
    <dbReference type="NCBI Taxonomy" id="205920"/>
    <lineage>
        <taxon>Bacteria</taxon>
        <taxon>Pseudomonadati</taxon>
        <taxon>Pseudomonadota</taxon>
        <taxon>Alphaproteobacteria</taxon>
        <taxon>Rickettsiales</taxon>
        <taxon>Anaplasmataceae</taxon>
        <taxon>Ehrlichia</taxon>
    </lineage>
</organism>
<name>ARLY_EHRCR</name>
<keyword id="KW-0028">Amino-acid biosynthesis</keyword>
<keyword id="KW-0055">Arginine biosynthesis</keyword>
<keyword id="KW-0963">Cytoplasm</keyword>
<keyword id="KW-0456">Lyase</keyword>
<keyword id="KW-1185">Reference proteome</keyword>
<dbReference type="EC" id="4.3.2.1" evidence="1"/>
<dbReference type="EMBL" id="CP000236">
    <property type="protein sequence ID" value="ABD44642.1"/>
    <property type="molecule type" value="Genomic_DNA"/>
</dbReference>
<dbReference type="RefSeq" id="WP_011452906.1">
    <property type="nucleotide sequence ID" value="NC_007799.1"/>
</dbReference>
<dbReference type="SMR" id="Q2GFQ7"/>
<dbReference type="STRING" id="205920.ECH_0937"/>
<dbReference type="KEGG" id="ech:ECH_0937"/>
<dbReference type="eggNOG" id="COG0165">
    <property type="taxonomic scope" value="Bacteria"/>
</dbReference>
<dbReference type="HOGENOM" id="CLU_027272_2_3_5"/>
<dbReference type="OrthoDB" id="9769623at2"/>
<dbReference type="UniPathway" id="UPA00068">
    <property type="reaction ID" value="UER00114"/>
</dbReference>
<dbReference type="Proteomes" id="UP000008320">
    <property type="component" value="Chromosome"/>
</dbReference>
<dbReference type="GO" id="GO:0005829">
    <property type="term" value="C:cytosol"/>
    <property type="evidence" value="ECO:0007669"/>
    <property type="project" value="TreeGrafter"/>
</dbReference>
<dbReference type="GO" id="GO:0004056">
    <property type="term" value="F:argininosuccinate lyase activity"/>
    <property type="evidence" value="ECO:0007669"/>
    <property type="project" value="UniProtKB-UniRule"/>
</dbReference>
<dbReference type="GO" id="GO:0042450">
    <property type="term" value="P:arginine biosynthetic process via ornithine"/>
    <property type="evidence" value="ECO:0007669"/>
    <property type="project" value="InterPro"/>
</dbReference>
<dbReference type="GO" id="GO:0006526">
    <property type="term" value="P:L-arginine biosynthetic process"/>
    <property type="evidence" value="ECO:0007669"/>
    <property type="project" value="UniProtKB-UniRule"/>
</dbReference>
<dbReference type="CDD" id="cd01359">
    <property type="entry name" value="Argininosuccinate_lyase"/>
    <property type="match status" value="1"/>
</dbReference>
<dbReference type="FunFam" id="1.10.275.10:FF:000002">
    <property type="entry name" value="Argininosuccinate lyase"/>
    <property type="match status" value="1"/>
</dbReference>
<dbReference type="FunFam" id="1.10.40.30:FF:000001">
    <property type="entry name" value="Argininosuccinate lyase"/>
    <property type="match status" value="1"/>
</dbReference>
<dbReference type="FunFam" id="1.20.200.10:FF:000015">
    <property type="entry name" value="argininosuccinate lyase isoform X2"/>
    <property type="match status" value="1"/>
</dbReference>
<dbReference type="Gene3D" id="1.10.40.30">
    <property type="entry name" value="Fumarase/aspartase (C-terminal domain)"/>
    <property type="match status" value="1"/>
</dbReference>
<dbReference type="Gene3D" id="1.20.200.10">
    <property type="entry name" value="Fumarase/aspartase (Central domain)"/>
    <property type="match status" value="1"/>
</dbReference>
<dbReference type="Gene3D" id="1.10.275.10">
    <property type="entry name" value="Fumarase/aspartase (N-terminal domain)"/>
    <property type="match status" value="1"/>
</dbReference>
<dbReference type="HAMAP" id="MF_00006">
    <property type="entry name" value="Arg_succ_lyase"/>
    <property type="match status" value="1"/>
</dbReference>
<dbReference type="InterPro" id="IPR029419">
    <property type="entry name" value="Arg_succ_lyase_C"/>
</dbReference>
<dbReference type="InterPro" id="IPR009049">
    <property type="entry name" value="Argininosuccinate_lyase"/>
</dbReference>
<dbReference type="InterPro" id="IPR024083">
    <property type="entry name" value="Fumarase/histidase_N"/>
</dbReference>
<dbReference type="InterPro" id="IPR020557">
    <property type="entry name" value="Fumarate_lyase_CS"/>
</dbReference>
<dbReference type="InterPro" id="IPR000362">
    <property type="entry name" value="Fumarate_lyase_fam"/>
</dbReference>
<dbReference type="InterPro" id="IPR022761">
    <property type="entry name" value="Fumarate_lyase_N"/>
</dbReference>
<dbReference type="InterPro" id="IPR008948">
    <property type="entry name" value="L-Aspartase-like"/>
</dbReference>
<dbReference type="NCBIfam" id="TIGR00838">
    <property type="entry name" value="argH"/>
    <property type="match status" value="1"/>
</dbReference>
<dbReference type="PANTHER" id="PTHR43814">
    <property type="entry name" value="ARGININOSUCCINATE LYASE"/>
    <property type="match status" value="1"/>
</dbReference>
<dbReference type="PANTHER" id="PTHR43814:SF1">
    <property type="entry name" value="ARGININOSUCCINATE LYASE"/>
    <property type="match status" value="1"/>
</dbReference>
<dbReference type="Pfam" id="PF14698">
    <property type="entry name" value="ASL_C2"/>
    <property type="match status" value="1"/>
</dbReference>
<dbReference type="Pfam" id="PF00206">
    <property type="entry name" value="Lyase_1"/>
    <property type="match status" value="1"/>
</dbReference>
<dbReference type="PRINTS" id="PR00145">
    <property type="entry name" value="ARGSUCLYASE"/>
</dbReference>
<dbReference type="PRINTS" id="PR00149">
    <property type="entry name" value="FUMRATELYASE"/>
</dbReference>
<dbReference type="SUPFAM" id="SSF48557">
    <property type="entry name" value="L-aspartase-like"/>
    <property type="match status" value="1"/>
</dbReference>
<dbReference type="PROSITE" id="PS00163">
    <property type="entry name" value="FUMARATE_LYASES"/>
    <property type="match status" value="1"/>
</dbReference>
<proteinExistence type="inferred from homology"/>
<sequence>MKNPLWGGRFTVSPSDIMKKINESISFDKILYEEDISGSIAHCKMLVNQKIISKYEGQLIIHGLEVIQNQISSGTFEFSTDLEDIHMNIEHHLKKMIGNIAGKLHTARSRNDQVATDFKLWIRKSIVKLETLLHELQQTILNIAEANYDTIMPGFTHLQIAQPVTLGHHLMAYFEMLKRDCSRWQDLHKRMNQCPAGSAALAGTSFPIDRHFIAQELKFDSPTENSIDAVSDRDYVIEFLSNASICIMHLSRLAEEIILWCSYNFKFITLSDNITTGSSIMPQKKNPDAAELIRGKTGRIFASLNQILVVMKGLPLAYSKDMQEDKEPVFDAANNLMLCIEAMNSMLNNITINKSNMLKAAEHDYSTATDLADWLVKNLNLSFRESHETTGQIVKLAEQNHCKLHELTLEQMKTIIPSITEDVFSILSVKNSVDSRTSYGGTAPANVIEAIKRGKLYLSNITTLHSENNM</sequence>
<gene>
    <name evidence="1" type="primary">argH</name>
    <name type="ordered locus">ECH_0937</name>
</gene>
<reference key="1">
    <citation type="journal article" date="2006" name="PLoS Genet.">
        <title>Comparative genomics of emerging human ehrlichiosis agents.</title>
        <authorList>
            <person name="Dunning Hotopp J.C."/>
            <person name="Lin M."/>
            <person name="Madupu R."/>
            <person name="Crabtree J."/>
            <person name="Angiuoli S.V."/>
            <person name="Eisen J.A."/>
            <person name="Seshadri R."/>
            <person name="Ren Q."/>
            <person name="Wu M."/>
            <person name="Utterback T.R."/>
            <person name="Smith S."/>
            <person name="Lewis M."/>
            <person name="Khouri H."/>
            <person name="Zhang C."/>
            <person name="Niu H."/>
            <person name="Lin Q."/>
            <person name="Ohashi N."/>
            <person name="Zhi N."/>
            <person name="Nelson W.C."/>
            <person name="Brinkac L.M."/>
            <person name="Dodson R.J."/>
            <person name="Rosovitz M.J."/>
            <person name="Sundaram J.P."/>
            <person name="Daugherty S.C."/>
            <person name="Davidsen T."/>
            <person name="Durkin A.S."/>
            <person name="Gwinn M.L."/>
            <person name="Haft D.H."/>
            <person name="Selengut J.D."/>
            <person name="Sullivan S.A."/>
            <person name="Zafar N."/>
            <person name="Zhou L."/>
            <person name="Benahmed F."/>
            <person name="Forberger H."/>
            <person name="Halpin R."/>
            <person name="Mulligan S."/>
            <person name="Robinson J."/>
            <person name="White O."/>
            <person name="Rikihisa Y."/>
            <person name="Tettelin H."/>
        </authorList>
    </citation>
    <scope>NUCLEOTIDE SEQUENCE [LARGE SCALE GENOMIC DNA]</scope>
    <source>
        <strain>ATCC CRL-10679 / Arkansas</strain>
    </source>
</reference>
<protein>
    <recommendedName>
        <fullName evidence="1">Argininosuccinate lyase</fullName>
        <shortName evidence="1">ASAL</shortName>
        <ecNumber evidence="1">4.3.2.1</ecNumber>
    </recommendedName>
    <alternativeName>
        <fullName evidence="1">Arginosuccinase</fullName>
    </alternativeName>
</protein>
<comment type="catalytic activity">
    <reaction evidence="1">
        <text>2-(N(omega)-L-arginino)succinate = fumarate + L-arginine</text>
        <dbReference type="Rhea" id="RHEA:24020"/>
        <dbReference type="ChEBI" id="CHEBI:29806"/>
        <dbReference type="ChEBI" id="CHEBI:32682"/>
        <dbReference type="ChEBI" id="CHEBI:57472"/>
        <dbReference type="EC" id="4.3.2.1"/>
    </reaction>
</comment>
<comment type="pathway">
    <text evidence="1">Amino-acid biosynthesis; L-arginine biosynthesis; L-arginine from L-ornithine and carbamoyl phosphate: step 3/3.</text>
</comment>
<comment type="subcellular location">
    <subcellularLocation>
        <location evidence="1">Cytoplasm</location>
    </subcellularLocation>
</comment>
<comment type="similarity">
    <text evidence="1">Belongs to the lyase 1 family. Argininosuccinate lyase subfamily.</text>
</comment>
<feature type="chain" id="PRO_0000240728" description="Argininosuccinate lyase">
    <location>
        <begin position="1"/>
        <end position="470"/>
    </location>
</feature>
<evidence type="ECO:0000255" key="1">
    <source>
        <dbReference type="HAMAP-Rule" id="MF_00006"/>
    </source>
</evidence>